<comment type="function">
    <text evidence="1">Part of a membrane-bound complex that couples electron transfer with translocation of ions across the membrane.</text>
</comment>
<comment type="cofactor">
    <cofactor evidence="1">
        <name>FMN</name>
        <dbReference type="ChEBI" id="CHEBI:58210"/>
    </cofactor>
</comment>
<comment type="subunit">
    <text evidence="1">The complex is composed of six subunits: RnfA, RnfB, RnfC, RnfD, RnfE and RnfG.</text>
</comment>
<comment type="subcellular location">
    <subcellularLocation>
        <location evidence="1">Cell inner membrane</location>
        <topology evidence="1">Multi-pass membrane protein</topology>
    </subcellularLocation>
</comment>
<comment type="similarity">
    <text evidence="1">Belongs to the NqrB/RnfD family.</text>
</comment>
<reference key="1">
    <citation type="submission" date="2007-08" db="EMBL/GenBank/DDBJ databases">
        <authorList>
            <consortium name="The Citrobacter koseri Genome Sequencing Project"/>
            <person name="McClelland M."/>
            <person name="Sanderson E.K."/>
            <person name="Porwollik S."/>
            <person name="Spieth J."/>
            <person name="Clifton W.S."/>
            <person name="Latreille P."/>
            <person name="Courtney L."/>
            <person name="Wang C."/>
            <person name="Pepin K."/>
            <person name="Bhonagiri V."/>
            <person name="Nash W."/>
            <person name="Johnson M."/>
            <person name="Thiruvilangam P."/>
            <person name="Wilson R."/>
        </authorList>
    </citation>
    <scope>NUCLEOTIDE SEQUENCE [LARGE SCALE GENOMIC DNA]</scope>
    <source>
        <strain>ATCC BAA-895 / CDC 4225-83 / SGSC4696</strain>
    </source>
</reference>
<evidence type="ECO:0000255" key="1">
    <source>
        <dbReference type="HAMAP-Rule" id="MF_00462"/>
    </source>
</evidence>
<accession>A8AH11</accession>
<dbReference type="EC" id="7.-.-.-" evidence="1"/>
<dbReference type="EMBL" id="CP000822">
    <property type="protein sequence ID" value="ABV12774.1"/>
    <property type="molecule type" value="Genomic_DNA"/>
</dbReference>
<dbReference type="SMR" id="A8AH11"/>
<dbReference type="STRING" id="290338.CKO_01642"/>
<dbReference type="GeneID" id="45135684"/>
<dbReference type="KEGG" id="cko:CKO_01642"/>
<dbReference type="HOGENOM" id="CLU_042020_0_0_6"/>
<dbReference type="OrthoDB" id="9776359at2"/>
<dbReference type="Proteomes" id="UP000008148">
    <property type="component" value="Chromosome"/>
</dbReference>
<dbReference type="GO" id="GO:0005886">
    <property type="term" value="C:plasma membrane"/>
    <property type="evidence" value="ECO:0007669"/>
    <property type="project" value="UniProtKB-SubCell"/>
</dbReference>
<dbReference type="GO" id="GO:0022900">
    <property type="term" value="P:electron transport chain"/>
    <property type="evidence" value="ECO:0007669"/>
    <property type="project" value="UniProtKB-UniRule"/>
</dbReference>
<dbReference type="GO" id="GO:0055085">
    <property type="term" value="P:transmembrane transport"/>
    <property type="evidence" value="ECO:0007669"/>
    <property type="project" value="InterPro"/>
</dbReference>
<dbReference type="HAMAP" id="MF_00462">
    <property type="entry name" value="RsxD_RnfD"/>
    <property type="match status" value="1"/>
</dbReference>
<dbReference type="InterPro" id="IPR004338">
    <property type="entry name" value="NqrB/RnfD"/>
</dbReference>
<dbReference type="InterPro" id="IPR011303">
    <property type="entry name" value="RnfD_bac"/>
</dbReference>
<dbReference type="NCBIfam" id="NF002011">
    <property type="entry name" value="PRK00816.1"/>
    <property type="match status" value="1"/>
</dbReference>
<dbReference type="NCBIfam" id="TIGR01946">
    <property type="entry name" value="rnfD"/>
    <property type="match status" value="1"/>
</dbReference>
<dbReference type="PANTHER" id="PTHR30578">
    <property type="entry name" value="ELECTRON TRANSPORT COMPLEX PROTEIN RNFD"/>
    <property type="match status" value="1"/>
</dbReference>
<dbReference type="PANTHER" id="PTHR30578:SF0">
    <property type="entry name" value="ION-TRANSLOCATING OXIDOREDUCTASE COMPLEX SUBUNIT D"/>
    <property type="match status" value="1"/>
</dbReference>
<dbReference type="Pfam" id="PF03116">
    <property type="entry name" value="NQR2_RnfD_RnfE"/>
    <property type="match status" value="1"/>
</dbReference>
<organism>
    <name type="scientific">Citrobacter koseri (strain ATCC BAA-895 / CDC 4225-83 / SGSC4696)</name>
    <dbReference type="NCBI Taxonomy" id="290338"/>
    <lineage>
        <taxon>Bacteria</taxon>
        <taxon>Pseudomonadati</taxon>
        <taxon>Pseudomonadota</taxon>
        <taxon>Gammaproteobacteria</taxon>
        <taxon>Enterobacterales</taxon>
        <taxon>Enterobacteriaceae</taxon>
        <taxon>Citrobacter</taxon>
    </lineage>
</organism>
<proteinExistence type="inferred from homology"/>
<feature type="chain" id="PRO_1000013623" description="Ion-translocating oxidoreductase complex subunit D">
    <location>
        <begin position="1"/>
        <end position="350"/>
    </location>
</feature>
<feature type="transmembrane region" description="Helical" evidence="1">
    <location>
        <begin position="20"/>
        <end position="40"/>
    </location>
</feature>
<feature type="transmembrane region" description="Helical" evidence="1">
    <location>
        <begin position="42"/>
        <end position="62"/>
    </location>
</feature>
<feature type="transmembrane region" description="Helical" evidence="1">
    <location>
        <begin position="68"/>
        <end position="88"/>
    </location>
</feature>
<feature type="transmembrane region" description="Helical" evidence="1">
    <location>
        <begin position="89"/>
        <end position="109"/>
    </location>
</feature>
<feature type="transmembrane region" description="Helical" evidence="1">
    <location>
        <begin position="123"/>
        <end position="143"/>
    </location>
</feature>
<feature type="transmembrane region" description="Helical" evidence="1">
    <location>
        <begin position="215"/>
        <end position="235"/>
    </location>
</feature>
<feature type="transmembrane region" description="Helical" evidence="1">
    <location>
        <begin position="244"/>
        <end position="264"/>
    </location>
</feature>
<feature type="transmembrane region" description="Helical" evidence="1">
    <location>
        <begin position="267"/>
        <end position="287"/>
    </location>
</feature>
<feature type="transmembrane region" description="Helical" evidence="1">
    <location>
        <begin position="301"/>
        <end position="321"/>
    </location>
</feature>
<feature type="transmembrane region" description="Helical" evidence="1">
    <location>
        <begin position="322"/>
        <end position="342"/>
    </location>
</feature>
<feature type="modified residue" description="FMN phosphoryl threonine" evidence="1">
    <location>
        <position position="187"/>
    </location>
</feature>
<name>RNFD_CITK8</name>
<sequence length="350" mass="37789">MVFRIASSPYTHNQRQTSRIMMLVLIAALPGIATQLWFFGWGTLFQIILAAVSALAAEAAVLQLRKQPIAAILKDNSALLTGLLLAVSIPPLAPWWMVVLGTVFAVIIAKQLYGGLGQNPFNPAMIGYVVLLISFPVQMTSWLPPHDIAATAPGLLDALQVIFTGHTASGGDMNTLRMGIDGISQATPLDTFKTSLHAGHAVEQIMQYPIYSGMLAGAGWQWVNIAWLIGGVWLLWQKAIRWHIPVSFLVTLAVCSTLGWAFAGDSLASPQLHLLSGATMLGAFFILTDPVTASTTNRGRLIFGALAGLLVWLIRSFGGYPDGVAFAVLLANITVPLIDYYTRPRVYGHR</sequence>
<protein>
    <recommendedName>
        <fullName evidence="1">Ion-translocating oxidoreductase complex subunit D</fullName>
        <ecNumber evidence="1">7.-.-.-</ecNumber>
    </recommendedName>
    <alternativeName>
        <fullName evidence="1">Rnf electron transport complex subunit D</fullName>
    </alternativeName>
</protein>
<keyword id="KW-0997">Cell inner membrane</keyword>
<keyword id="KW-1003">Cell membrane</keyword>
<keyword id="KW-0249">Electron transport</keyword>
<keyword id="KW-0285">Flavoprotein</keyword>
<keyword id="KW-0288">FMN</keyword>
<keyword id="KW-0472">Membrane</keyword>
<keyword id="KW-0597">Phosphoprotein</keyword>
<keyword id="KW-1185">Reference proteome</keyword>
<keyword id="KW-1278">Translocase</keyword>
<keyword id="KW-0812">Transmembrane</keyword>
<keyword id="KW-1133">Transmembrane helix</keyword>
<keyword id="KW-0813">Transport</keyword>
<gene>
    <name evidence="1" type="primary">rnfD</name>
    <name type="ordered locus">CKO_01642</name>
</gene>